<organism>
    <name type="scientific">Escherichia coli (strain K12)</name>
    <dbReference type="NCBI Taxonomy" id="83333"/>
    <lineage>
        <taxon>Bacteria</taxon>
        <taxon>Pseudomonadati</taxon>
        <taxon>Pseudomonadota</taxon>
        <taxon>Gammaproteobacteria</taxon>
        <taxon>Enterobacterales</taxon>
        <taxon>Enterobacteriaceae</taxon>
        <taxon>Escherichia</taxon>
    </lineage>
</organism>
<keyword id="KW-0520">NAD</keyword>
<keyword id="KW-0560">Oxidoreductase</keyword>
<keyword id="KW-1185">Reference proteome</keyword>
<gene>
    <name evidence="8" type="primary">kduD</name>
    <name type="synonym">ygeC</name>
    <name type="synonym">yqeD</name>
    <name type="ordered locus">b2842</name>
    <name type="ordered locus">JW2810</name>
</gene>
<protein>
    <recommendedName>
        <fullName evidence="8">2-dehydro-3-deoxy-D-gluconate 5-dehydrogenase</fullName>
        <ecNumber evidence="6">1.1.1.127</ecNumber>
    </recommendedName>
    <alternativeName>
        <fullName evidence="7">2-deoxy-D-gluconate 3-dehydrogenase</fullName>
    </alternativeName>
    <alternativeName>
        <fullName>2-keto-3-deoxygluconate 5-dehydrogenase</fullName>
    </alternativeName>
    <alternativeName>
        <fullName evidence="9">2-keto-3-deoxygluconate oxidoreductase</fullName>
        <shortName>KDG oxidoreductase</shortName>
    </alternativeName>
    <alternativeName>
        <fullName evidence="8">20-ketosteroid reductase</fullName>
        <ecNumber evidence="5">1.1.1.-</ecNumber>
    </alternativeName>
</protein>
<feature type="chain" id="PRO_0000054715" description="2-dehydro-3-deoxy-D-gluconate 5-dehydrogenase">
    <location>
        <begin position="1"/>
        <end position="253"/>
    </location>
</feature>
<feature type="active site" description="Proton acceptor" evidence="2">
    <location>
        <position position="158"/>
    </location>
</feature>
<feature type="binding site" evidence="1">
    <location>
        <begin position="14"/>
        <end position="38"/>
    </location>
    <ligand>
        <name>NAD(+)</name>
        <dbReference type="ChEBI" id="CHEBI:57540"/>
    </ligand>
</feature>
<feature type="binding site" evidence="1">
    <location>
        <position position="145"/>
    </location>
    <ligand>
        <name>substrate</name>
    </ligand>
</feature>
<evidence type="ECO:0000250" key="1"/>
<evidence type="ECO:0000255" key="2">
    <source>
        <dbReference type="PROSITE-ProRule" id="PRU10001"/>
    </source>
</evidence>
<evidence type="ECO:0000269" key="3">
    <source>
    </source>
</evidence>
<evidence type="ECO:0000269" key="4">
    <source>
    </source>
</evidence>
<evidence type="ECO:0000269" key="5">
    <source>
    </source>
</evidence>
<evidence type="ECO:0000269" key="6">
    <source ref="4"/>
</evidence>
<evidence type="ECO:0000303" key="7">
    <source>
    </source>
</evidence>
<evidence type="ECO:0000303" key="8">
    <source>
    </source>
</evidence>
<evidence type="ECO:0000303" key="9">
    <source ref="4"/>
</evidence>
<evidence type="ECO:0000305" key="10"/>
<evidence type="ECO:0000305" key="11">
    <source>
    </source>
</evidence>
<evidence type="ECO:0000305" key="12">
    <source>
    </source>
</evidence>
<dbReference type="EC" id="1.1.1.127" evidence="6"/>
<dbReference type="EC" id="1.1.1.-" evidence="5"/>
<dbReference type="EMBL" id="U29581">
    <property type="protein sequence ID" value="AAB40489.1"/>
    <property type="molecule type" value="Genomic_DNA"/>
</dbReference>
<dbReference type="EMBL" id="U00096">
    <property type="protein sequence ID" value="AAC75881.1"/>
    <property type="molecule type" value="Genomic_DNA"/>
</dbReference>
<dbReference type="EMBL" id="AP009048">
    <property type="protein sequence ID" value="BAE76911.1"/>
    <property type="molecule type" value="Genomic_DNA"/>
</dbReference>
<dbReference type="EMBL" id="J03732">
    <property type="status" value="NOT_ANNOTATED_CDS"/>
    <property type="molecule type" value="Genomic_DNA"/>
</dbReference>
<dbReference type="PIR" id="C65067">
    <property type="entry name" value="C65067"/>
</dbReference>
<dbReference type="RefSeq" id="NP_417319.1">
    <property type="nucleotide sequence ID" value="NC_000913.3"/>
</dbReference>
<dbReference type="RefSeq" id="WP_000603502.1">
    <property type="nucleotide sequence ID" value="NZ_LN832404.1"/>
</dbReference>
<dbReference type="SMR" id="P37769"/>
<dbReference type="BioGRID" id="4262312">
    <property type="interactions" value="37"/>
</dbReference>
<dbReference type="FunCoup" id="P37769">
    <property type="interactions" value="562"/>
</dbReference>
<dbReference type="IntAct" id="P37769">
    <property type="interactions" value="2"/>
</dbReference>
<dbReference type="STRING" id="511145.b2842"/>
<dbReference type="jPOST" id="P37769"/>
<dbReference type="PaxDb" id="511145-b2842"/>
<dbReference type="EnsemblBacteria" id="AAC75881">
    <property type="protein sequence ID" value="AAC75881"/>
    <property type="gene ID" value="b2842"/>
</dbReference>
<dbReference type="GeneID" id="947323"/>
<dbReference type="KEGG" id="ecj:JW2810"/>
<dbReference type="KEGG" id="eco:b2842"/>
<dbReference type="KEGG" id="ecoc:C3026_15605"/>
<dbReference type="PATRIC" id="fig|1411691.4.peg.3892"/>
<dbReference type="EchoBASE" id="EB2264"/>
<dbReference type="eggNOG" id="COG1028">
    <property type="taxonomic scope" value="Bacteria"/>
</dbReference>
<dbReference type="HOGENOM" id="CLU_010194_1_1_6"/>
<dbReference type="InParanoid" id="P37769"/>
<dbReference type="OMA" id="WEVANVI"/>
<dbReference type="OrthoDB" id="9803333at2"/>
<dbReference type="PhylomeDB" id="P37769"/>
<dbReference type="BioCyc" id="EcoCyc:KDUD-MONOMER"/>
<dbReference type="BioCyc" id="MetaCyc:KDUD-MONOMER"/>
<dbReference type="PRO" id="PR:P37769"/>
<dbReference type="Proteomes" id="UP000000625">
    <property type="component" value="Chromosome"/>
</dbReference>
<dbReference type="GO" id="GO:0102635">
    <property type="term" value="F:11-deoxycorticosterone reductase activity"/>
    <property type="evidence" value="ECO:0007669"/>
    <property type="project" value="RHEA"/>
</dbReference>
<dbReference type="GO" id="GO:0047001">
    <property type="term" value="F:2-dehydro-3-deoxy-D-gluconate 5-dehydrogenase activity"/>
    <property type="evidence" value="ECO:0007669"/>
    <property type="project" value="UniProtKB-EC"/>
</dbReference>
<dbReference type="GO" id="GO:0008678">
    <property type="term" value="F:2-deoxy-D-gluconate 3-dehydrogenase activity"/>
    <property type="evidence" value="ECO:0007669"/>
    <property type="project" value="InterPro"/>
</dbReference>
<dbReference type="GO" id="GO:0051287">
    <property type="term" value="F:NAD binding"/>
    <property type="evidence" value="ECO:0007669"/>
    <property type="project" value="InterPro"/>
</dbReference>
<dbReference type="GO" id="GO:0016616">
    <property type="term" value="F:oxidoreductase activity, acting on the CH-OH group of donors, NAD or NADP as acceptor"/>
    <property type="evidence" value="ECO:0000314"/>
    <property type="project" value="EcoCyc"/>
</dbReference>
<dbReference type="GO" id="GO:0033764">
    <property type="term" value="F:steroid dehydrogenase activity, acting on the CH-OH group of donors, NAD or NADP as acceptor"/>
    <property type="evidence" value="ECO:0000314"/>
    <property type="project" value="EcoCyc"/>
</dbReference>
<dbReference type="GO" id="GO:0019698">
    <property type="term" value="P:D-galacturonate catabolic process"/>
    <property type="evidence" value="ECO:0000270"/>
    <property type="project" value="EcoCyc"/>
</dbReference>
<dbReference type="GO" id="GO:0042840">
    <property type="term" value="P:D-glucuronate catabolic process"/>
    <property type="evidence" value="ECO:0000270"/>
    <property type="project" value="EcoCyc"/>
</dbReference>
<dbReference type="CDD" id="cd05347">
    <property type="entry name" value="Ga5DH-like_SDR_c"/>
    <property type="match status" value="1"/>
</dbReference>
<dbReference type="FunFam" id="3.40.50.720:FF:000081">
    <property type="entry name" value="2-deoxy-D-gluconate 3-dehydrogenase"/>
    <property type="match status" value="1"/>
</dbReference>
<dbReference type="Gene3D" id="3.40.50.720">
    <property type="entry name" value="NAD(P)-binding Rossmann-like Domain"/>
    <property type="match status" value="1"/>
</dbReference>
<dbReference type="InterPro" id="IPR011286">
    <property type="entry name" value="2-deoxy-D-gluc_3_DH"/>
</dbReference>
<dbReference type="InterPro" id="IPR036291">
    <property type="entry name" value="NAD(P)-bd_dom_sf"/>
</dbReference>
<dbReference type="InterPro" id="IPR020904">
    <property type="entry name" value="Sc_DH/Rdtase_CS"/>
</dbReference>
<dbReference type="InterPro" id="IPR002347">
    <property type="entry name" value="SDR_fam"/>
</dbReference>
<dbReference type="NCBIfam" id="TIGR01832">
    <property type="entry name" value="kduD"/>
    <property type="match status" value="1"/>
</dbReference>
<dbReference type="NCBIfam" id="NF006528">
    <property type="entry name" value="PRK08993.1"/>
    <property type="match status" value="1"/>
</dbReference>
<dbReference type="PANTHER" id="PTHR42760:SF5">
    <property type="entry name" value="2-DEHYDRO-3-DEOXY-D-GLUCONATE 5-DEHYDROGENASE"/>
    <property type="match status" value="1"/>
</dbReference>
<dbReference type="PANTHER" id="PTHR42760">
    <property type="entry name" value="SHORT-CHAIN DEHYDROGENASES/REDUCTASES FAMILY MEMBER"/>
    <property type="match status" value="1"/>
</dbReference>
<dbReference type="Pfam" id="PF00106">
    <property type="entry name" value="adh_short"/>
    <property type="match status" value="1"/>
</dbReference>
<dbReference type="PRINTS" id="PR00081">
    <property type="entry name" value="GDHRDH"/>
</dbReference>
<dbReference type="PRINTS" id="PR00080">
    <property type="entry name" value="SDRFAMILY"/>
</dbReference>
<dbReference type="SUPFAM" id="SSF51735">
    <property type="entry name" value="NAD(P)-binding Rossmann-fold domains"/>
    <property type="match status" value="1"/>
</dbReference>
<dbReference type="PROSITE" id="PS00061">
    <property type="entry name" value="ADH_SHORT"/>
    <property type="match status" value="1"/>
</dbReference>
<accession>P37769</accession>
<accession>Q2M9Z5</accession>
<proteinExistence type="evidence at protein level"/>
<name>KDUD_ECOLI</name>
<sequence length="253" mass="27070">MILSAFSLEGKVAVVTGCDTGLGQGMALGLAQAGCDIVGINIVEPTETIEQVTALGRRFLSLTADLRKIDGIPALLDRAVAEFGHIDILVNNAGLIRREDALEFSEKDWDDVMNLNIKSVFFMSQAAAKHFIAQGNGGKIINIASMLSFQGGIRVPSYTASKSGVMGVTRLMANEWAKHNINVNAIAPGYMATNNTQQLRADEQRSAEILDRIPAGRWGLPSDLMGPIVFLASSASDYVNGYTIAVDGGWLAR</sequence>
<comment type="function">
    <text evidence="4 5 6">Catalyzes the reversible reduction of 2,5-diketo-3-deoxygluconate (DKII or 4,6-dihydroxy-2,5-dioxohexanoate) into 2-keto-3-deoxygluconate (KDG or 2-dehydro-3-deoxygluconate) with a concomitant oxidation of NADH (Ref.4). To a lesser extent, can also reduce 5-keto-D-gluconate and oxidize D-gluconate and 1,2-propanediol (PubMed:24509771). Together with KduI, seems to play a role in the catabolism of hexuronates under osmotic stress conditions, substituting for the regular hexuronate degrading enzymes UxaABC and UxuAB whose expression is repressed in these conditions (PubMed:23437267). In vitro, also exhibits NADH-dependent 20-ketosteroid reductase activity against eukaryotic steroid hormone 11-deoxycorticosterone (11-DOC), which is converted into the product 4-pregnen-20,21-diol-3-one. In addition to 11-DOC, five other C21 steroid compounds (11-deoxycortisol, cortisol, corticosterone, cortisone, and 21-hydroxypregnenolone) are reduced by KduD, but steroids lacking the hydroxyl group at C21 position, such as pregnenolone, testosterone propionate, cortisone acetate, or progesterone, cannot be used as substrate (PubMed:24509771).</text>
</comment>
<comment type="catalytic activity">
    <reaction evidence="6">
        <text>2-dehydro-3-deoxy-D-gluconate + NAD(+) = 3-deoxy-D-glycero-2,5-hexodiulosonate + NADH + H(+)</text>
        <dbReference type="Rhea" id="RHEA:24232"/>
        <dbReference type="ChEBI" id="CHEBI:15378"/>
        <dbReference type="ChEBI" id="CHEBI:29071"/>
        <dbReference type="ChEBI" id="CHEBI:57540"/>
        <dbReference type="ChEBI" id="CHEBI:57945"/>
        <dbReference type="ChEBI" id="CHEBI:57990"/>
        <dbReference type="EC" id="1.1.1.127"/>
    </reaction>
</comment>
<comment type="catalytic activity">
    <reaction evidence="5">
        <text>4-pregnen-20,21-diol-3-one + NAD(+) = 21-hydroxyprogesterone + NADH + H(+)</text>
        <dbReference type="Rhea" id="RHEA:47716"/>
        <dbReference type="ChEBI" id="CHEBI:15378"/>
        <dbReference type="ChEBI" id="CHEBI:16973"/>
        <dbReference type="ChEBI" id="CHEBI:57540"/>
        <dbReference type="ChEBI" id="CHEBI:57945"/>
        <dbReference type="ChEBI" id="CHEBI:87841"/>
    </reaction>
</comment>
<comment type="biophysicochemical properties">
    <kinetics>
        <KM evidence="6">30 mM for 2-keto-3-deoxygluconate</KM>
        <KM evidence="5">0.23 mM for 11-deoxycorticosterone</KM>
        <KM evidence="5">0.19 mM for 11-deoxycortisol</KM>
        <KM evidence="5">544.8 mM for D-gluconate</KM>
        <KM evidence="5">184.5 mM for 5-keto-D-gluconate</KM>
        <KM evidence="5">3231 mM for 1,2-propanediol</KM>
        <KM evidence="5">0.037 mM for NADH</KM>
        <KM evidence="5">0.285 mM for NAD(+)</KM>
        <text evidence="5">kcat is 3.1 min(-1) for 11-DOC reduction. kcat is 16.6 min(-1) for 11-deoxycortisol (RSS) reduction. kcat is 58.3 min(-1) for D-gluconate oxidation. kcat is 30.7 min(-1) for 5-keto-D-gluconate reduction. kcat is 18.3 min(-1) for 1,2-propanediol oxidation.</text>
    </kinetics>
    <phDependence>
        <text evidence="5">Optimum pH is 7.0 for the reduction of 11-DOC, and 9.5 for the oxidation of D-gluconate.</text>
    </phDependence>
    <temperatureDependence>
        <text evidence="5">Optimum temperature is 37 degrees Celsius for the reduction of 11-DOC.</text>
    </temperatureDependence>
</comment>
<comment type="subunit">
    <text evidence="12">Homotetramer.</text>
</comment>
<comment type="induction">
    <text evidence="3 4 11">Is under the control of KdgR repressor (Probable). Its expression is up-regulated in the presence of galacturonate and glucuronate (PubMed:23437267). Is also up-regulated in intestinal E.coli of mice fed a lactose-rich diet and down-regulated in E.coli of mice on a casein-rich diet (PubMed:22427493).</text>
</comment>
<comment type="biotechnology">
    <text evidence="12">Could be used for the production of valuable bioactive 20-hydroxysteroids; these compounds have potential for pharmaceutical applications as inhibitors of steroid hormone metabolizing enzymes, for the treatment of breast cancer, endometriosis, and prostate diseases in humans.</text>
</comment>
<comment type="similarity">
    <text evidence="10">Belongs to the short-chain dehydrogenases/reductases (SDR) family.</text>
</comment>
<comment type="caution">
    <text evidence="12">Most strains of E.coli do not exhibit 20-ketosteroid reductase activity against steroid substrates such as 11-DOC, despite containing a full-length kduD gene. This activity is observed in the K12 / DH5-alpha strain, whose disruption of the kdgR gene leads to the constitutive expression of KduD in this strain.</text>
</comment>
<reference key="1">
    <citation type="journal article" date="1997" name="Science">
        <title>The complete genome sequence of Escherichia coli K-12.</title>
        <authorList>
            <person name="Blattner F.R."/>
            <person name="Plunkett G. III"/>
            <person name="Bloch C.A."/>
            <person name="Perna N.T."/>
            <person name="Burland V."/>
            <person name="Riley M."/>
            <person name="Collado-Vides J."/>
            <person name="Glasner J.D."/>
            <person name="Rode C.K."/>
            <person name="Mayhew G.F."/>
            <person name="Gregor J."/>
            <person name="Davis N.W."/>
            <person name="Kirkpatrick H.A."/>
            <person name="Goeden M.A."/>
            <person name="Rose D.J."/>
            <person name="Mau B."/>
            <person name="Shao Y."/>
        </authorList>
    </citation>
    <scope>NUCLEOTIDE SEQUENCE [LARGE SCALE GENOMIC DNA]</scope>
    <source>
        <strain>K12 / MG1655 / ATCC 47076</strain>
    </source>
</reference>
<reference key="2">
    <citation type="journal article" date="2006" name="Mol. Syst. Biol.">
        <title>Highly accurate genome sequences of Escherichia coli K-12 strains MG1655 and W3110.</title>
        <authorList>
            <person name="Hayashi K."/>
            <person name="Morooka N."/>
            <person name="Yamamoto Y."/>
            <person name="Fujita K."/>
            <person name="Isono K."/>
            <person name="Choi S."/>
            <person name="Ohtsubo E."/>
            <person name="Baba T."/>
            <person name="Wanner B.L."/>
            <person name="Mori H."/>
            <person name="Horiuchi T."/>
        </authorList>
    </citation>
    <scope>NUCLEOTIDE SEQUENCE [LARGE SCALE GENOMIC DNA]</scope>
    <source>
        <strain>K12 / W3110 / ATCC 27325 / DSM 5911</strain>
    </source>
</reference>
<reference key="3">
    <citation type="journal article" date="1988" name="J. Biol. Chem.">
        <title>The cloning, DNA sequence, and overexpression of the gene araE coding for arabinose-proton symport in Escherichia coli K12.</title>
        <authorList>
            <person name="Maiden M.C.J."/>
            <person name="Jones-Mortimer M.C."/>
            <person name="Henderson P.J.F."/>
        </authorList>
    </citation>
    <scope>NUCLEOTIDE SEQUENCE [GENOMIC DNA] OF 216-253</scope>
    <source>
        <strain>K12 / JM2433</strain>
    </source>
</reference>
<reference key="4">
    <citation type="thesis" date="1977" institute="Claude Bernard University" country="France">
        <title>La voie degradative secondaire du 2 ceto 3 desoxygluconate chez Escherichia coli. Oxydation enzymatique du 2 ceto 3 desoxygluconate.</title>
        <authorList>
            <person name="Hantz O."/>
        </authorList>
    </citation>
    <scope>FUNCTION</scope>
    <scope>CATALYTIC ACTIVITY</scope>
    <scope>BIOPHYSICOCHEMICAL PROPERTIES</scope>
    <source>
        <strain>K12</strain>
    </source>
</reference>
<reference key="5">
    <citation type="journal article" date="1991" name="Mol. Microbiol.">
        <title>Analysis of an Erwinia chrysanthemi gene cluster involved in pectin degradation.</title>
        <authorList>
            <person name="Condemine G."/>
            <person name="Robert-Baudouy J."/>
        </authorList>
    </citation>
    <scope>IDENTIFICATION</scope>
</reference>
<reference key="6">
    <citation type="journal article" date="2004" name="Microbiology">
        <title>Comparative genomics of the KdgR regulon in Erwinia chrysanthemi 3937 and other gamma-proteobacteria.</title>
        <authorList>
            <person name="Rodionov D.A."/>
            <person name="Gelfand M.S."/>
            <person name="Hugouvieux-Cotte-Pattat N."/>
        </authorList>
    </citation>
    <scope>TRANSCRIPTIONAL REGULATION</scope>
    <source>
        <strain>K12</strain>
    </source>
</reference>
<reference key="7">
    <citation type="journal article" date="2012" name="Appl. Environ. Microbiol.">
        <title>Impact of nutritional factors on the proteome of intestinal Escherichia coli: induction of OxyR-dependent proteins AhpF and Dps by a lactose-rich diet.</title>
        <authorList>
            <person name="Rothe M."/>
            <person name="Alpert C."/>
            <person name="Engst W."/>
            <person name="Musiol S."/>
            <person name="Loh G."/>
            <person name="Blaut M."/>
        </authorList>
    </citation>
    <scope>INDUCTION</scope>
    <source>
        <strain>K12</strain>
    </source>
</reference>
<reference key="8">
    <citation type="journal article" date="2013" name="PLoS ONE">
        <title>Novel insights into E. coli's hexuronate metabolism: KduI facilitates the conversion of galacturonate and glucuronate under osmotic stress conditions.</title>
        <authorList>
            <person name="Rothe M."/>
            <person name="Alpert C."/>
            <person name="Loh G."/>
            <person name="Blaut M."/>
        </authorList>
    </citation>
    <scope>FUNCTION</scope>
    <scope>INDUCTION</scope>
    <source>
        <strain>K12 / MG1655 / ATCC 47076</strain>
    </source>
</reference>
<reference key="9">
    <citation type="journal article" date="2014" name="Appl. Microbiol. Biotechnol.">
        <title>Escherichia coli kduD encodes an oxidoreductase that converts both sugar and steroid substrates.</title>
        <authorList>
            <person name="Tubeleviciute A."/>
            <person name="Teese M.G."/>
            <person name="Jose J."/>
        </authorList>
    </citation>
    <scope>FUNCTION</scope>
    <scope>CATALYTIC ACTIVITY</scope>
    <scope>SUBSTRATE SPECIFICITY</scope>
    <scope>BIOPHYSICOCHEMICAL PROPERTIES</scope>
    <scope>BIOTECHNOLOGY</scope>
    <scope>IDENTIFICATION BY MASS SPECTROMETRY</scope>
    <source>
        <strain>K12 / DH5-alpha</strain>
    </source>
</reference>